<evidence type="ECO:0000250" key="1"/>
<evidence type="ECO:0000256" key="2">
    <source>
        <dbReference type="SAM" id="MobiDB-lite"/>
    </source>
</evidence>
<evidence type="ECO:0000305" key="3"/>
<organism>
    <name type="scientific">Arabidopsis thaliana</name>
    <name type="common">Mouse-ear cress</name>
    <dbReference type="NCBI Taxonomy" id="3702"/>
    <lineage>
        <taxon>Eukaryota</taxon>
        <taxon>Viridiplantae</taxon>
        <taxon>Streptophyta</taxon>
        <taxon>Embryophyta</taxon>
        <taxon>Tracheophyta</taxon>
        <taxon>Spermatophyta</taxon>
        <taxon>Magnoliopsida</taxon>
        <taxon>eudicotyledons</taxon>
        <taxon>Gunneridae</taxon>
        <taxon>Pentapetalae</taxon>
        <taxon>rosids</taxon>
        <taxon>malvids</taxon>
        <taxon>Brassicales</taxon>
        <taxon>Brassicaceae</taxon>
        <taxon>Camelineae</taxon>
        <taxon>Arabidopsis</taxon>
    </lineage>
</organism>
<gene>
    <name type="ordered locus">At1g52360</name>
    <name type="ORF">F19K6.16</name>
</gene>
<dbReference type="EMBL" id="AC037424">
    <property type="protein sequence ID" value="AAG51545.1"/>
    <property type="molecule type" value="Genomic_DNA"/>
</dbReference>
<dbReference type="EMBL" id="CP002684">
    <property type="protein sequence ID" value="AEE32792.1"/>
    <property type="molecule type" value="Genomic_DNA"/>
</dbReference>
<dbReference type="EMBL" id="CP002684">
    <property type="protein sequence ID" value="ANM60541.1"/>
    <property type="molecule type" value="Genomic_DNA"/>
</dbReference>
<dbReference type="EMBL" id="AK118389">
    <property type="protein sequence ID" value="BAC42999.1"/>
    <property type="status" value="ALT_INIT"/>
    <property type="molecule type" value="mRNA"/>
</dbReference>
<dbReference type="EMBL" id="BT006480">
    <property type="protein sequence ID" value="AAP21288.1"/>
    <property type="molecule type" value="mRNA"/>
</dbReference>
<dbReference type="PIR" id="G96563">
    <property type="entry name" value="G96563"/>
</dbReference>
<dbReference type="RefSeq" id="NP_001322821.1">
    <molecule id="Q9C827-1"/>
    <property type="nucleotide sequence ID" value="NM_001333539.1"/>
</dbReference>
<dbReference type="RefSeq" id="NP_175645.1">
    <molecule id="Q9C827-1"/>
    <property type="nucleotide sequence ID" value="NM_104114.3"/>
</dbReference>
<dbReference type="SMR" id="Q9C827"/>
<dbReference type="BioGRID" id="26891">
    <property type="interactions" value="2"/>
</dbReference>
<dbReference type="FunCoup" id="Q9C827">
    <property type="interactions" value="4843"/>
</dbReference>
<dbReference type="IntAct" id="Q9C827">
    <property type="interactions" value="1"/>
</dbReference>
<dbReference type="STRING" id="3702.Q9C827"/>
<dbReference type="iPTMnet" id="Q9C827"/>
<dbReference type="MetOSite" id="Q9C827"/>
<dbReference type="PaxDb" id="3702-AT1G52360.2"/>
<dbReference type="ProteomicsDB" id="241136">
    <molecule id="Q9C827-1"/>
</dbReference>
<dbReference type="EnsemblPlants" id="AT1G52360.1">
    <molecule id="Q9C827-1"/>
    <property type="protein sequence ID" value="AT1G52360.1"/>
    <property type="gene ID" value="AT1G52360"/>
</dbReference>
<dbReference type="EnsemblPlants" id="AT1G52360.4">
    <molecule id="Q9C827-1"/>
    <property type="protein sequence ID" value="AT1G52360.4"/>
    <property type="gene ID" value="AT1G52360"/>
</dbReference>
<dbReference type="GeneID" id="841666"/>
<dbReference type="Gramene" id="AT1G52360.1">
    <molecule id="Q9C827-1"/>
    <property type="protein sequence ID" value="AT1G52360.1"/>
    <property type="gene ID" value="AT1G52360"/>
</dbReference>
<dbReference type="Gramene" id="AT1G52360.4">
    <molecule id="Q9C827-1"/>
    <property type="protein sequence ID" value="AT1G52360.4"/>
    <property type="gene ID" value="AT1G52360"/>
</dbReference>
<dbReference type="KEGG" id="ath:AT1G52360"/>
<dbReference type="Araport" id="AT1G52360"/>
<dbReference type="TAIR" id="AT1G52360"/>
<dbReference type="eggNOG" id="KOG0276">
    <property type="taxonomic scope" value="Eukaryota"/>
</dbReference>
<dbReference type="HOGENOM" id="CLU_005507_0_0_1"/>
<dbReference type="InParanoid" id="Q9C827"/>
<dbReference type="OMA" id="AVEYINH"/>
<dbReference type="PhylomeDB" id="Q9C827"/>
<dbReference type="PRO" id="PR:Q9C827"/>
<dbReference type="Proteomes" id="UP000006548">
    <property type="component" value="Chromosome 1"/>
</dbReference>
<dbReference type="ExpressionAtlas" id="Q9C827">
    <property type="expression patterns" value="baseline and differential"/>
</dbReference>
<dbReference type="GO" id="GO:0030663">
    <property type="term" value="C:COPI-coated vesicle membrane"/>
    <property type="evidence" value="ECO:0007669"/>
    <property type="project" value="UniProtKB-SubCell"/>
</dbReference>
<dbReference type="GO" id="GO:0000139">
    <property type="term" value="C:Golgi membrane"/>
    <property type="evidence" value="ECO:0007669"/>
    <property type="project" value="UniProtKB-SubCell"/>
</dbReference>
<dbReference type="GO" id="GO:0030117">
    <property type="term" value="C:membrane coat"/>
    <property type="evidence" value="ECO:0007669"/>
    <property type="project" value="InterPro"/>
</dbReference>
<dbReference type="GO" id="GO:0005198">
    <property type="term" value="F:structural molecule activity"/>
    <property type="evidence" value="ECO:0007669"/>
    <property type="project" value="InterPro"/>
</dbReference>
<dbReference type="GO" id="GO:0006886">
    <property type="term" value="P:intracellular protein transport"/>
    <property type="evidence" value="ECO:0007669"/>
    <property type="project" value="InterPro"/>
</dbReference>
<dbReference type="GO" id="GO:0016192">
    <property type="term" value="P:vesicle-mediated transport"/>
    <property type="evidence" value="ECO:0007669"/>
    <property type="project" value="UniProtKB-KW"/>
</dbReference>
<dbReference type="CDD" id="cd22947">
    <property type="entry name" value="Coatomer_WDAD_beta-like"/>
    <property type="match status" value="1"/>
</dbReference>
<dbReference type="CDD" id="cd00200">
    <property type="entry name" value="WD40"/>
    <property type="match status" value="1"/>
</dbReference>
<dbReference type="FunFam" id="1.25.40.470:FF:000001">
    <property type="entry name" value="Coatomer subunit beta"/>
    <property type="match status" value="1"/>
</dbReference>
<dbReference type="FunFam" id="2.130.10.10:FF:000008">
    <property type="entry name" value="Coatomer subunit beta"/>
    <property type="match status" value="1"/>
</dbReference>
<dbReference type="Gene3D" id="1.25.40.470">
    <property type="match status" value="1"/>
</dbReference>
<dbReference type="Gene3D" id="2.130.10.10">
    <property type="entry name" value="YVTN repeat-like/Quinoprotein amine dehydrogenase"/>
    <property type="match status" value="1"/>
</dbReference>
<dbReference type="InterPro" id="IPR006692">
    <property type="entry name" value="Beta-prop_COPA/B_2nd"/>
</dbReference>
<dbReference type="InterPro" id="IPR050844">
    <property type="entry name" value="Coatomer_complex_subunit"/>
</dbReference>
<dbReference type="InterPro" id="IPR016453">
    <property type="entry name" value="COPB2"/>
</dbReference>
<dbReference type="InterPro" id="IPR020472">
    <property type="entry name" value="G-protein_beta_WD-40_rep"/>
</dbReference>
<dbReference type="InterPro" id="IPR056176">
    <property type="entry name" value="TPR_COPA_B"/>
</dbReference>
<dbReference type="InterPro" id="IPR015943">
    <property type="entry name" value="WD40/YVTN_repeat-like_dom_sf"/>
</dbReference>
<dbReference type="InterPro" id="IPR036322">
    <property type="entry name" value="WD40_repeat_dom_sf"/>
</dbReference>
<dbReference type="InterPro" id="IPR001680">
    <property type="entry name" value="WD40_rpt"/>
</dbReference>
<dbReference type="PANTHER" id="PTHR19876">
    <property type="entry name" value="COATOMER"/>
    <property type="match status" value="1"/>
</dbReference>
<dbReference type="PANTHER" id="PTHR19876:SF69">
    <property type="entry name" value="COATOMER SUBUNIT BETA'-2"/>
    <property type="match status" value="1"/>
</dbReference>
<dbReference type="Pfam" id="PF04053">
    <property type="entry name" value="B-prop_COPA_B_2nd"/>
    <property type="match status" value="1"/>
</dbReference>
<dbReference type="Pfam" id="PF23953">
    <property type="entry name" value="TPR_COPA_B"/>
    <property type="match status" value="1"/>
</dbReference>
<dbReference type="Pfam" id="PF00400">
    <property type="entry name" value="WD40"/>
    <property type="match status" value="5"/>
</dbReference>
<dbReference type="PIRSF" id="PIRSF005567">
    <property type="entry name" value="Coatomer_beta'_subunit"/>
    <property type="match status" value="1"/>
</dbReference>
<dbReference type="PRINTS" id="PR00320">
    <property type="entry name" value="GPROTEINBRPT"/>
</dbReference>
<dbReference type="SMART" id="SM00320">
    <property type="entry name" value="WD40"/>
    <property type="match status" value="7"/>
</dbReference>
<dbReference type="SUPFAM" id="SSF50978">
    <property type="entry name" value="WD40 repeat-like"/>
    <property type="match status" value="2"/>
</dbReference>
<dbReference type="PROSITE" id="PS50082">
    <property type="entry name" value="WD_REPEATS_2"/>
    <property type="match status" value="4"/>
</dbReference>
<dbReference type="PROSITE" id="PS50294">
    <property type="entry name" value="WD_REPEATS_REGION"/>
    <property type="match status" value="1"/>
</dbReference>
<sequence length="926" mass="104467">MPLRLEIKRKLAQRSERVKSVDLHPTEPWILASLYSGTLCIWNYQTQVMAKSFEVTELPVRSAKFVARKQWVVAGADDMYIRVYNYNTMDKVKVFEAHSDYIRCVAVHPTLPYVLSSSDDMLIKLWDWEKGWACTQIFEGHSHYVMQVTFNPKDTNTFASASLDRTIKIWNLGSPDPNFTLDAHQKGVNCVDYFTGGDKPYLITGSDDHTAKVWDYQTKSCVQTLEGHTHNVSAVCFHPELPIIITGSEDGTVRIWHATTYRLENTLNYGLERVWAIGYIKSSRRVVIGYDEGTIMVKLGREIPVASMDNTGKIIWAKHNEIQTANIKSIGADYEVTDGERLPLSVKELGTCDLYPQSLKHNPNGRFVVVCGDGEYIIYTALAWRNRSFGSGLEFVWSSEGECAVRESSSKIKIFSKNFQEKRSIRPTFSAEKIFGGTLLAMCSSDFICFYDWAECRLIQRIDVTVKNLYWADSGDLVAIASDTSFYILKFNRDLVTSHFDSGRPTEEEGVEDAFEVLHENDERVRTGIWVGDCFIYNNSSWKLNYCVGGEVTTMYHLDRPMYLLGYLASQSRVFLVDKEFNVIGYTLLLSLIEYKTLVMRGDLDKASEILPTIPKDQHNSVAHFLESRGMIEDALEIATDPDYRFELAIQLGRLEIAQEIAVEVQSESKWKQLGELAMSSGKLQMAEECMKYAMDLSGLLLLYSSLGDAEGVTKLATLAKEQGKNNVAFLCLFMLGKLEDCLQLLVESNRIPEAALMARSYLPSKVSEIVALWRKDLSKVNSKAAESLADPEEYSNLFEDWQVALSVEAKAVETRGVYTGAKDYPSHADKSSMTLVEAFRNLQVEEEESLENGDMDHEEVVAEENGNEQRNEDDVAEHVEEHHEEKEAEEEEGIVDGDSTDGAVLVNGSEADEEWGTNNEGNPSA</sequence>
<proteinExistence type="evidence at protein level"/>
<feature type="chain" id="PRO_0000285605" description="Coatomer subunit beta'-2">
    <location>
        <begin position="1"/>
        <end position="926"/>
    </location>
</feature>
<feature type="repeat" description="WD 1">
    <location>
        <begin position="13"/>
        <end position="52"/>
    </location>
</feature>
<feature type="repeat" description="WD 2">
    <location>
        <begin position="55"/>
        <end position="94"/>
    </location>
</feature>
<feature type="repeat" description="WD 3">
    <location>
        <begin position="97"/>
        <end position="136"/>
    </location>
</feature>
<feature type="repeat" description="WD 4">
    <location>
        <begin position="140"/>
        <end position="180"/>
    </location>
</feature>
<feature type="repeat" description="WD 5">
    <location>
        <begin position="183"/>
        <end position="224"/>
    </location>
</feature>
<feature type="repeat" description="WD 6">
    <location>
        <begin position="227"/>
        <end position="266"/>
    </location>
</feature>
<feature type="repeat" description="WD 7">
    <location>
        <begin position="269"/>
        <end position="309"/>
    </location>
</feature>
<feature type="repeat" description="WD 8">
    <location>
        <begin position="351"/>
        <end position="390"/>
    </location>
</feature>
<feature type="repeat" description="WD 9">
    <location>
        <begin position="461"/>
        <end position="501"/>
    </location>
</feature>
<feature type="region of interest" description="Disordered" evidence="2">
    <location>
        <begin position="847"/>
        <end position="926"/>
    </location>
</feature>
<feature type="compositionally biased region" description="Basic and acidic residues" evidence="2">
    <location>
        <begin position="868"/>
        <end position="887"/>
    </location>
</feature>
<feature type="compositionally biased region" description="Acidic residues" evidence="2">
    <location>
        <begin position="888"/>
        <end position="900"/>
    </location>
</feature>
<feature type="compositionally biased region" description="Polar residues" evidence="2">
    <location>
        <begin position="917"/>
        <end position="926"/>
    </location>
</feature>
<protein>
    <recommendedName>
        <fullName>Coatomer subunit beta'-2</fullName>
    </recommendedName>
    <alternativeName>
        <fullName>Beta'-coat protein 2</fullName>
        <shortName>Beta'-COP 2</shortName>
    </alternativeName>
</protein>
<comment type="function">
    <text evidence="1">The coatomer is a cytosolic protein complex that binds to dilysine motifs and reversibly associates with Golgi non-clathrin-coated vesicles, which further mediate biosynthetic protein transport from the ER, via the Golgi up to the trans Golgi network. Coatomer complex is required for budding from Golgi membranes, and is essential for the retrograde Golgi-to-ER transport of dilysine-tagged proteins (By similarity).</text>
</comment>
<comment type="subunit">
    <text evidence="1">Oligomeric complex that consists of at least the alpha, beta, beta', gamma, delta, epsilon and zeta subunits.</text>
</comment>
<comment type="subcellular location">
    <subcellularLocation>
        <location evidence="1">Cytoplasm</location>
    </subcellularLocation>
    <subcellularLocation>
        <location evidence="1">Golgi apparatus membrane</location>
        <topology evidence="1">Peripheral membrane protein</topology>
        <orientation evidence="1">Cytoplasmic side</orientation>
    </subcellularLocation>
    <subcellularLocation>
        <location evidence="1">Cytoplasmic vesicle</location>
        <location evidence="1">COPI-coated vesicle membrane</location>
        <topology evidence="1">Peripheral membrane protein</topology>
        <orientation evidence="1">Cytoplasmic side</orientation>
    </subcellularLocation>
    <text evidence="1">The coatomer is cytoplasmic or polymerized on the cytoplasmic side of the Golgi, as well as on the vesicles/buds originating from it.</text>
</comment>
<comment type="alternative products">
    <event type="alternative splicing"/>
    <isoform>
        <id>Q9C827-1</id>
        <name>1</name>
        <sequence type="displayed"/>
    </isoform>
    <text>A number of isoforms are produced. According to EST sequences.</text>
</comment>
<comment type="similarity">
    <text evidence="3">Belongs to the WD repeat COPB2 family.</text>
</comment>
<comment type="sequence caution" evidence="3">
    <conflict type="erroneous initiation">
        <sequence resource="EMBL-CDS" id="BAC42999"/>
    </conflict>
</comment>
<keyword id="KW-0025">Alternative splicing</keyword>
<keyword id="KW-0963">Cytoplasm</keyword>
<keyword id="KW-0968">Cytoplasmic vesicle</keyword>
<keyword id="KW-0931">ER-Golgi transport</keyword>
<keyword id="KW-0333">Golgi apparatus</keyword>
<keyword id="KW-0472">Membrane</keyword>
<keyword id="KW-0653">Protein transport</keyword>
<keyword id="KW-1185">Reference proteome</keyword>
<keyword id="KW-0677">Repeat</keyword>
<keyword id="KW-0813">Transport</keyword>
<keyword id="KW-0853">WD repeat</keyword>
<accession>Q9C827</accession>
<accession>Q8GX79</accession>
<reference key="1">
    <citation type="journal article" date="2000" name="Nature">
        <title>Sequence and analysis of chromosome 1 of the plant Arabidopsis thaliana.</title>
        <authorList>
            <person name="Theologis A."/>
            <person name="Ecker J.R."/>
            <person name="Palm C.J."/>
            <person name="Federspiel N.A."/>
            <person name="Kaul S."/>
            <person name="White O."/>
            <person name="Alonso J."/>
            <person name="Altafi H."/>
            <person name="Araujo R."/>
            <person name="Bowman C.L."/>
            <person name="Brooks S.Y."/>
            <person name="Buehler E."/>
            <person name="Chan A."/>
            <person name="Chao Q."/>
            <person name="Chen H."/>
            <person name="Cheuk R.F."/>
            <person name="Chin C.W."/>
            <person name="Chung M.K."/>
            <person name="Conn L."/>
            <person name="Conway A.B."/>
            <person name="Conway A.R."/>
            <person name="Creasy T.H."/>
            <person name="Dewar K."/>
            <person name="Dunn P."/>
            <person name="Etgu P."/>
            <person name="Feldblyum T.V."/>
            <person name="Feng J.-D."/>
            <person name="Fong B."/>
            <person name="Fujii C.Y."/>
            <person name="Gill J.E."/>
            <person name="Goldsmith A.D."/>
            <person name="Haas B."/>
            <person name="Hansen N.F."/>
            <person name="Hughes B."/>
            <person name="Huizar L."/>
            <person name="Hunter J.L."/>
            <person name="Jenkins J."/>
            <person name="Johnson-Hopson C."/>
            <person name="Khan S."/>
            <person name="Khaykin E."/>
            <person name="Kim C.J."/>
            <person name="Koo H.L."/>
            <person name="Kremenetskaia I."/>
            <person name="Kurtz D.B."/>
            <person name="Kwan A."/>
            <person name="Lam B."/>
            <person name="Langin-Hooper S."/>
            <person name="Lee A."/>
            <person name="Lee J.M."/>
            <person name="Lenz C.A."/>
            <person name="Li J.H."/>
            <person name="Li Y.-P."/>
            <person name="Lin X."/>
            <person name="Liu S.X."/>
            <person name="Liu Z.A."/>
            <person name="Luros J.S."/>
            <person name="Maiti R."/>
            <person name="Marziali A."/>
            <person name="Militscher J."/>
            <person name="Miranda M."/>
            <person name="Nguyen M."/>
            <person name="Nierman W.C."/>
            <person name="Osborne B.I."/>
            <person name="Pai G."/>
            <person name="Peterson J."/>
            <person name="Pham P.K."/>
            <person name="Rizzo M."/>
            <person name="Rooney T."/>
            <person name="Rowley D."/>
            <person name="Sakano H."/>
            <person name="Salzberg S.L."/>
            <person name="Schwartz J.R."/>
            <person name="Shinn P."/>
            <person name="Southwick A.M."/>
            <person name="Sun H."/>
            <person name="Tallon L.J."/>
            <person name="Tambunga G."/>
            <person name="Toriumi M.J."/>
            <person name="Town C.D."/>
            <person name="Utterback T."/>
            <person name="Van Aken S."/>
            <person name="Vaysberg M."/>
            <person name="Vysotskaia V.S."/>
            <person name="Walker M."/>
            <person name="Wu D."/>
            <person name="Yu G."/>
            <person name="Fraser C.M."/>
            <person name="Venter J.C."/>
            <person name="Davis R.W."/>
        </authorList>
    </citation>
    <scope>NUCLEOTIDE SEQUENCE [LARGE SCALE GENOMIC DNA]</scope>
    <source>
        <strain>cv. Columbia</strain>
    </source>
</reference>
<reference key="2">
    <citation type="journal article" date="2017" name="Plant J.">
        <title>Araport11: a complete reannotation of the Arabidopsis thaliana reference genome.</title>
        <authorList>
            <person name="Cheng C.Y."/>
            <person name="Krishnakumar V."/>
            <person name="Chan A.P."/>
            <person name="Thibaud-Nissen F."/>
            <person name="Schobel S."/>
            <person name="Town C.D."/>
        </authorList>
    </citation>
    <scope>GENOME REANNOTATION</scope>
    <source>
        <strain>cv. Columbia</strain>
    </source>
</reference>
<reference key="3">
    <citation type="journal article" date="2002" name="Science">
        <title>Functional annotation of a full-length Arabidopsis cDNA collection.</title>
        <authorList>
            <person name="Seki M."/>
            <person name="Narusaka M."/>
            <person name="Kamiya A."/>
            <person name="Ishida J."/>
            <person name="Satou M."/>
            <person name="Sakurai T."/>
            <person name="Nakajima M."/>
            <person name="Enju A."/>
            <person name="Akiyama K."/>
            <person name="Oono Y."/>
            <person name="Muramatsu M."/>
            <person name="Hayashizaki Y."/>
            <person name="Kawai J."/>
            <person name="Carninci P."/>
            <person name="Itoh M."/>
            <person name="Ishii Y."/>
            <person name="Arakawa T."/>
            <person name="Shibata K."/>
            <person name="Shinagawa A."/>
            <person name="Shinozaki K."/>
        </authorList>
    </citation>
    <scope>NUCLEOTIDE SEQUENCE [LARGE SCALE MRNA] OF 337-926</scope>
    <source>
        <strain>cv. Columbia</strain>
    </source>
</reference>
<reference key="4">
    <citation type="journal article" date="2003" name="Science">
        <title>Empirical analysis of transcriptional activity in the Arabidopsis genome.</title>
        <authorList>
            <person name="Yamada K."/>
            <person name="Lim J."/>
            <person name="Dale J.M."/>
            <person name="Chen H."/>
            <person name="Shinn P."/>
            <person name="Palm C.J."/>
            <person name="Southwick A.M."/>
            <person name="Wu H.C."/>
            <person name="Kim C.J."/>
            <person name="Nguyen M."/>
            <person name="Pham P.K."/>
            <person name="Cheuk R.F."/>
            <person name="Karlin-Newmann G."/>
            <person name="Liu S.X."/>
            <person name="Lam B."/>
            <person name="Sakano H."/>
            <person name="Wu T."/>
            <person name="Yu G."/>
            <person name="Miranda M."/>
            <person name="Quach H.L."/>
            <person name="Tripp M."/>
            <person name="Chang C.H."/>
            <person name="Lee J.M."/>
            <person name="Toriumi M.J."/>
            <person name="Chan M.M."/>
            <person name="Tang C.C."/>
            <person name="Onodera C.S."/>
            <person name="Deng J.M."/>
            <person name="Akiyama K."/>
            <person name="Ansari Y."/>
            <person name="Arakawa T."/>
            <person name="Banh J."/>
            <person name="Banno F."/>
            <person name="Bowser L."/>
            <person name="Brooks S.Y."/>
            <person name="Carninci P."/>
            <person name="Chao Q."/>
            <person name="Choy N."/>
            <person name="Enju A."/>
            <person name="Goldsmith A.D."/>
            <person name="Gurjal M."/>
            <person name="Hansen N.F."/>
            <person name="Hayashizaki Y."/>
            <person name="Johnson-Hopson C."/>
            <person name="Hsuan V.W."/>
            <person name="Iida K."/>
            <person name="Karnes M."/>
            <person name="Khan S."/>
            <person name="Koesema E."/>
            <person name="Ishida J."/>
            <person name="Jiang P.X."/>
            <person name="Jones T."/>
            <person name="Kawai J."/>
            <person name="Kamiya A."/>
            <person name="Meyers C."/>
            <person name="Nakajima M."/>
            <person name="Narusaka M."/>
            <person name="Seki M."/>
            <person name="Sakurai T."/>
            <person name="Satou M."/>
            <person name="Tamse R."/>
            <person name="Vaysberg M."/>
            <person name="Wallender E.K."/>
            <person name="Wong C."/>
            <person name="Yamamura Y."/>
            <person name="Yuan S."/>
            <person name="Shinozaki K."/>
            <person name="Davis R.W."/>
            <person name="Theologis A."/>
            <person name="Ecker J.R."/>
        </authorList>
    </citation>
    <scope>NUCLEOTIDE SEQUENCE [LARGE SCALE MRNA] OF 442-926</scope>
    <source>
        <strain>cv. Columbia</strain>
    </source>
</reference>
<reference key="5">
    <citation type="journal article" date="2007" name="Mol. Cell. Proteomics">
        <title>Multidimensional protein identification technology (MudPIT) analysis of ubiquitinated proteins in plants.</title>
        <authorList>
            <person name="Maor R."/>
            <person name="Jones A."/>
            <person name="Nuehse T.S."/>
            <person name="Studholme D.J."/>
            <person name="Peck S.C."/>
            <person name="Shirasu K."/>
        </authorList>
    </citation>
    <scope>IDENTIFICATION BY MASS SPECTROMETRY [LARGE SCALE ANALYSIS]</scope>
    <source>
        <strain>cv. Landsberg erecta</strain>
    </source>
</reference>
<name>COB22_ARATH</name>